<sequence length="508" mass="55599">MVNLKIVIVIIVLISSNVVLAKENSRSLKVAAQEENEFTEINSAPLKVSEAARYSFADIVEPLIPAVVNISTIEYVNSKSENAEKDPLQEKVNDFLEKLNIPLNLEEVDQTPKSVPLGSGFIIEPNGLIVTNYHVIANVDKINIKLADNTELSAKLIGNDTKTDLALLKIDSEEPLPFVEFGDSNDARVGDWVIAIGNPFGNLGGTVTSGIISSKGRDIDIDTDNIVDNFIQTDAAINNGNSGGPMFNLDQKVIGVNTAIFSPLGTNIGIGFAIPSNTAKPIIERLKKDGKVSRGRLGVTIQDLTEDISEGLGLKNTRGVLVAKVQEDGPGDKAGIKTGDIIIEFADIPVKNTKKLRVIIADAPIDQEVKVKILRDKKELELPIKITSDNEEVTKDSTEETNKKEITNKEENNLSITKNNITFGNLTEELRQKYTIPQDKMGIVITNIDEEESSFKIGDLITNINQKSIDDISKLEELYENAKKSDKKNILLLIERGSSNMFVPLQVM</sequence>
<name>DEGPL_RICCN</name>
<protein>
    <recommendedName>
        <fullName>Probable periplasmic serine endoprotease DegP-like</fullName>
        <ecNumber>3.4.21.107</ecNumber>
    </recommendedName>
    <alternativeName>
        <fullName>Protease Do</fullName>
    </alternativeName>
</protein>
<accession>Q92JA1</accession>
<evidence type="ECO:0000250" key="1"/>
<evidence type="ECO:0000255" key="2"/>
<evidence type="ECO:0000255" key="3">
    <source>
        <dbReference type="PROSITE-ProRule" id="PRU00143"/>
    </source>
</evidence>
<evidence type="ECO:0000305" key="4"/>
<keyword id="KW-0378">Hydrolase</keyword>
<keyword id="KW-0574">Periplasm</keyword>
<keyword id="KW-0645">Protease</keyword>
<keyword id="KW-0677">Repeat</keyword>
<keyword id="KW-0720">Serine protease</keyword>
<keyword id="KW-0732">Signal</keyword>
<keyword id="KW-0346">Stress response</keyword>
<dbReference type="EC" id="3.4.21.107"/>
<dbReference type="EMBL" id="AE006914">
    <property type="protein sequence ID" value="AAL02704.1"/>
    <property type="status" value="ALT_INIT"/>
    <property type="molecule type" value="Genomic_DNA"/>
</dbReference>
<dbReference type="PIR" id="F97720">
    <property type="entry name" value="F97720"/>
</dbReference>
<dbReference type="RefSeq" id="WP_041471707.1">
    <property type="nucleotide sequence ID" value="NC_003103.1"/>
</dbReference>
<dbReference type="SMR" id="Q92JA1"/>
<dbReference type="GeneID" id="928023"/>
<dbReference type="KEGG" id="rco:RC0166"/>
<dbReference type="PATRIC" id="fig|272944.4.peg.195"/>
<dbReference type="HOGENOM" id="CLU_020120_1_0_5"/>
<dbReference type="Proteomes" id="UP000000816">
    <property type="component" value="Chromosome"/>
</dbReference>
<dbReference type="GO" id="GO:0030288">
    <property type="term" value="C:outer membrane-bounded periplasmic space"/>
    <property type="evidence" value="ECO:0000250"/>
    <property type="project" value="UniProtKB"/>
</dbReference>
<dbReference type="GO" id="GO:0004252">
    <property type="term" value="F:serine-type endopeptidase activity"/>
    <property type="evidence" value="ECO:0000250"/>
    <property type="project" value="UniProtKB"/>
</dbReference>
<dbReference type="GO" id="GO:0006508">
    <property type="term" value="P:proteolysis"/>
    <property type="evidence" value="ECO:0007669"/>
    <property type="project" value="UniProtKB-KW"/>
</dbReference>
<dbReference type="CDD" id="cd10839">
    <property type="entry name" value="cpPDZ1_DegP-like"/>
    <property type="match status" value="1"/>
</dbReference>
<dbReference type="FunFam" id="2.40.10.120:FF:000007">
    <property type="entry name" value="Periplasmic serine endoprotease DegP-like"/>
    <property type="match status" value="1"/>
</dbReference>
<dbReference type="Gene3D" id="2.30.42.10">
    <property type="match status" value="1"/>
</dbReference>
<dbReference type="Gene3D" id="2.30.42.60">
    <property type="match status" value="1"/>
</dbReference>
<dbReference type="Gene3D" id="2.40.10.120">
    <property type="match status" value="1"/>
</dbReference>
<dbReference type="InterPro" id="IPR001478">
    <property type="entry name" value="PDZ"/>
</dbReference>
<dbReference type="InterPro" id="IPR036034">
    <property type="entry name" value="PDZ_sf"/>
</dbReference>
<dbReference type="InterPro" id="IPR011782">
    <property type="entry name" value="Pept_S1C_Do"/>
</dbReference>
<dbReference type="InterPro" id="IPR009003">
    <property type="entry name" value="Peptidase_S1_PA"/>
</dbReference>
<dbReference type="InterPro" id="IPR001940">
    <property type="entry name" value="Peptidase_S1C"/>
</dbReference>
<dbReference type="NCBIfam" id="TIGR02037">
    <property type="entry name" value="degP_htrA_DO"/>
    <property type="match status" value="1"/>
</dbReference>
<dbReference type="PANTHER" id="PTHR22939:SF130">
    <property type="entry name" value="PERIPLASMIC SERINE ENDOPROTEASE DEGP-LIKE-RELATED"/>
    <property type="match status" value="1"/>
</dbReference>
<dbReference type="PANTHER" id="PTHR22939">
    <property type="entry name" value="SERINE PROTEASE FAMILY S1C HTRA-RELATED"/>
    <property type="match status" value="1"/>
</dbReference>
<dbReference type="Pfam" id="PF13180">
    <property type="entry name" value="PDZ_2"/>
    <property type="match status" value="1"/>
</dbReference>
<dbReference type="Pfam" id="PF13365">
    <property type="entry name" value="Trypsin_2"/>
    <property type="match status" value="1"/>
</dbReference>
<dbReference type="PRINTS" id="PR00834">
    <property type="entry name" value="PROTEASES2C"/>
</dbReference>
<dbReference type="SMART" id="SM00228">
    <property type="entry name" value="PDZ"/>
    <property type="match status" value="2"/>
</dbReference>
<dbReference type="SUPFAM" id="SSF50156">
    <property type="entry name" value="PDZ domain-like"/>
    <property type="match status" value="2"/>
</dbReference>
<dbReference type="SUPFAM" id="SSF50494">
    <property type="entry name" value="Trypsin-like serine proteases"/>
    <property type="match status" value="1"/>
</dbReference>
<dbReference type="PROSITE" id="PS50106">
    <property type="entry name" value="PDZ"/>
    <property type="match status" value="1"/>
</dbReference>
<reference key="1">
    <citation type="journal article" date="2001" name="Science">
        <title>Mechanisms of evolution in Rickettsia conorii and R. prowazekii.</title>
        <authorList>
            <person name="Ogata H."/>
            <person name="Audic S."/>
            <person name="Renesto-Audiffren P."/>
            <person name="Fournier P.-E."/>
            <person name="Barbe V."/>
            <person name="Samson D."/>
            <person name="Roux V."/>
            <person name="Cossart P."/>
            <person name="Weissenbach J."/>
            <person name="Claverie J.-M."/>
            <person name="Raoult D."/>
        </authorList>
    </citation>
    <scope>NUCLEOTIDE SEQUENCE [LARGE SCALE GENOMIC DNA]</scope>
    <source>
        <strain>ATCC VR-613 / Malish 7</strain>
    </source>
</reference>
<proteinExistence type="inferred from homology"/>
<organism>
    <name type="scientific">Rickettsia conorii (strain ATCC VR-613 / Malish 7)</name>
    <dbReference type="NCBI Taxonomy" id="272944"/>
    <lineage>
        <taxon>Bacteria</taxon>
        <taxon>Pseudomonadati</taxon>
        <taxon>Pseudomonadota</taxon>
        <taxon>Alphaproteobacteria</taxon>
        <taxon>Rickettsiales</taxon>
        <taxon>Rickettsiaceae</taxon>
        <taxon>Rickettsieae</taxon>
        <taxon>Rickettsia</taxon>
        <taxon>spotted fever group</taxon>
    </lineage>
</organism>
<feature type="signal peptide" evidence="2">
    <location>
        <begin position="1"/>
        <end position="23"/>
    </location>
</feature>
<feature type="chain" id="PRO_0000026934" description="Probable periplasmic serine endoprotease DegP-like">
    <location>
        <begin position="24"/>
        <end position="508"/>
    </location>
</feature>
<feature type="domain" description="PDZ 1" evidence="3">
    <location>
        <begin position="286"/>
        <end position="377"/>
    </location>
</feature>
<feature type="domain" description="PDZ 2" evidence="3">
    <location>
        <begin position="413"/>
        <end position="497"/>
    </location>
</feature>
<feature type="region of interest" description="Serine protease">
    <location>
        <begin position="119"/>
        <end position="284"/>
    </location>
</feature>
<feature type="active site" description="Charge relay system" evidence="2">
    <location>
        <position position="134"/>
    </location>
</feature>
<feature type="active site" description="Charge relay system" evidence="2">
    <location>
        <position position="164"/>
    </location>
</feature>
<feature type="active site" description="Charge relay system" evidence="2">
    <location>
        <position position="242"/>
    </location>
</feature>
<feature type="binding site" evidence="1">
    <location>
        <begin position="240"/>
        <end position="242"/>
    </location>
    <ligand>
        <name>substrate</name>
    </ligand>
</feature>
<feature type="binding site" evidence="1">
    <location>
        <begin position="297"/>
        <end position="301"/>
    </location>
    <ligand>
        <name>substrate</name>
    </ligand>
</feature>
<gene>
    <name type="primary">htrA</name>
    <name type="ordered locus">RC0166</name>
</gene>
<comment type="function">
    <text evidence="1">Might be efficient in the degradation of transiently denatured and unfolded proteins which accumulate in the periplasm following stress conditions.</text>
</comment>
<comment type="catalytic activity">
    <reaction>
        <text>Acts on substrates that are at least partially unfolded. The cleavage site P1 residue is normally between a pair of hydrophobic residues, such as Val-|-Val.</text>
        <dbReference type="EC" id="3.4.21.107"/>
    </reaction>
</comment>
<comment type="subcellular location">
    <subcellularLocation>
        <location evidence="4">Periplasm</location>
    </subcellularLocation>
</comment>
<comment type="similarity">
    <text evidence="4">Belongs to the peptidase S1C family.</text>
</comment>
<comment type="sequence caution" evidence="4">
    <conflict type="erroneous initiation">
        <sequence resource="EMBL-CDS" id="AAL02704"/>
    </conflict>
    <text>Extended N-terminus.</text>
</comment>